<comment type="function">
    <text evidence="1">May be involved in the biosynthesis of caffeine.</text>
</comment>
<comment type="cofactor">
    <cofactor evidence="2">
        <name>Mg(2+)</name>
        <dbReference type="ChEBI" id="CHEBI:18420"/>
    </cofactor>
    <text evidence="2">Binds 1 Mg(2+) ion per subunit.</text>
</comment>
<comment type="pathway">
    <text evidence="1">Alkaloid biosynthesis.</text>
</comment>
<comment type="similarity">
    <text evidence="5">Belongs to the methyltransferase superfamily. Type-7 methyltransferase family.</text>
</comment>
<organism>
    <name type="scientific">Coffea canephora</name>
    <name type="common">Robusta coffee</name>
    <dbReference type="NCBI Taxonomy" id="49390"/>
    <lineage>
        <taxon>Eukaryota</taxon>
        <taxon>Viridiplantae</taxon>
        <taxon>Streptophyta</taxon>
        <taxon>Embryophyta</taxon>
        <taxon>Tracheophyta</taxon>
        <taxon>Spermatophyta</taxon>
        <taxon>Magnoliopsida</taxon>
        <taxon>eudicotyledons</taxon>
        <taxon>Gunneridae</taxon>
        <taxon>Pentapetalae</taxon>
        <taxon>asterids</taxon>
        <taxon>lamiids</taxon>
        <taxon>Gentianales</taxon>
        <taxon>Rubiaceae</taxon>
        <taxon>Ixoroideae</taxon>
        <taxon>Gardenieae complex</taxon>
        <taxon>Bertiereae - Coffeeae clade</taxon>
        <taxon>Coffeeae</taxon>
        <taxon>Coffea</taxon>
    </lineage>
</organism>
<sequence length="385" mass="43319">MELQEVLHMNGGEGEASYAKNSSFNQLALAKVKPFLEQCIRELLRANLPNINKCIKVADLGCASGPNTLLTVRDTVQSIDKVRQEMKNELERPTIQVFLTDLFQNDFNSVFMLLPSFYRKLEKENGRKIGSCLIAAMPGSFHGRLFPEESMHFLHSSYSLQFLSQVPSGLVTELGITANKRSIYSSKASPPPVQKAYLDQFTKDFTTFLRMRSEELLSRGRMLLTCICKGDECDGPNTMDLLEMAINDLVVEGRLGEEKLDSFNVPIYTASVEEVKCMVEEEGSFEILYLQTFKLRYDAGFSIDDDCQVRSHSPEYSDEHARAAHVASLIRSVYEPILASHFGEAIIPDIFHRFATNAAKVIRLGKGFYNNLIISLAKKPEKSDV</sequence>
<feature type="chain" id="PRO_0000451792" description="Probable caffeine synthase MTL1">
    <location>
        <begin position="1"/>
        <end position="385"/>
    </location>
</feature>
<feature type="binding site" evidence="1">
    <location>
        <position position="18"/>
    </location>
    <ligand>
        <name>S-adenosyl-L-homocysteine</name>
        <dbReference type="ChEBI" id="CHEBI:57856"/>
    </ligand>
</feature>
<feature type="binding site" evidence="1">
    <location>
        <position position="62"/>
    </location>
    <ligand>
        <name>S-adenosyl-L-homocysteine</name>
        <dbReference type="ChEBI" id="CHEBI:57856"/>
    </ligand>
</feature>
<feature type="binding site" evidence="1">
    <location>
        <position position="67"/>
    </location>
    <ligand>
        <name>S-adenosyl-L-homocysteine</name>
        <dbReference type="ChEBI" id="CHEBI:57856"/>
    </ligand>
</feature>
<feature type="binding site" evidence="1">
    <location>
        <position position="101"/>
    </location>
    <ligand>
        <name>S-adenosyl-L-homocysteine</name>
        <dbReference type="ChEBI" id="CHEBI:57856"/>
    </ligand>
</feature>
<feature type="binding site" evidence="1">
    <location>
        <position position="102"/>
    </location>
    <ligand>
        <name>S-adenosyl-L-homocysteine</name>
        <dbReference type="ChEBI" id="CHEBI:57856"/>
    </ligand>
</feature>
<feature type="binding site" evidence="1">
    <location>
        <position position="140"/>
    </location>
    <ligand>
        <name>S-adenosyl-L-homocysteine</name>
        <dbReference type="ChEBI" id="CHEBI:57856"/>
    </ligand>
</feature>
<feature type="binding site" evidence="1">
    <location>
        <position position="141"/>
    </location>
    <ligand>
        <name>S-adenosyl-L-homocysteine</name>
        <dbReference type="ChEBI" id="CHEBI:57856"/>
    </ligand>
</feature>
<feature type="binding site" evidence="1">
    <location>
        <position position="158"/>
    </location>
    <ligand>
        <name>caffeine</name>
        <dbReference type="ChEBI" id="CHEBI:27732"/>
    </ligand>
</feature>
<feature type="binding site" evidence="1">
    <location>
        <position position="161"/>
    </location>
    <ligand>
        <name>caffeine</name>
        <dbReference type="ChEBI" id="CHEBI:27732"/>
    </ligand>
</feature>
<feature type="binding site" evidence="1">
    <location>
        <position position="162"/>
    </location>
    <ligand>
        <name>caffeine</name>
        <dbReference type="ChEBI" id="CHEBI:27732"/>
    </ligand>
</feature>
<feature type="binding site" evidence="2">
    <location>
        <position position="179"/>
    </location>
    <ligand>
        <name>Mg(2+)</name>
        <dbReference type="ChEBI" id="CHEBI:18420"/>
    </ligand>
</feature>
<feature type="binding site" evidence="1">
    <location>
        <position position="238"/>
    </location>
    <ligand>
        <name>caffeine</name>
        <dbReference type="ChEBI" id="CHEBI:27732"/>
    </ligand>
</feature>
<feature type="binding site" evidence="2">
    <location>
        <position position="261"/>
    </location>
    <ligand>
        <name>Mg(2+)</name>
        <dbReference type="ChEBI" id="CHEBI:18420"/>
    </ligand>
</feature>
<feature type="binding site" evidence="2">
    <location>
        <position position="263"/>
    </location>
    <ligand>
        <name>Mg(2+)</name>
        <dbReference type="ChEBI" id="CHEBI:18420"/>
    </ligand>
</feature>
<feature type="binding site" evidence="2">
    <location>
        <position position="264"/>
    </location>
    <ligand>
        <name>Mg(2+)</name>
        <dbReference type="ChEBI" id="CHEBI:18420"/>
    </ligand>
</feature>
<feature type="binding site" evidence="1">
    <location>
        <position position="369"/>
    </location>
    <ligand>
        <name>caffeine</name>
        <dbReference type="ChEBI" id="CHEBI:27732"/>
    </ligand>
</feature>
<feature type="site" description="Involved in substrate discrimination" evidence="3">
    <location>
        <position position="155"/>
    </location>
</feature>
<feature type="site" description="Involved in substrate discrimination" evidence="3">
    <location>
        <position position="267"/>
    </location>
</feature>
<feature type="site" description="Involved in substrate discrimination" evidence="3">
    <location>
        <position position="344"/>
    </location>
</feature>
<protein>
    <recommendedName>
        <fullName evidence="5">Probable caffeine synthase MTL1</fullName>
        <ecNumber evidence="1">2.1.1.-</ecNumber>
    </recommendedName>
    <alternativeName>
        <fullName evidence="4">Methyltransferase-like 1</fullName>
        <shortName evidence="4">CcMTL1</shortName>
    </alternativeName>
</protein>
<name>CS1_COFCA</name>
<proteinExistence type="inferred from homology"/>
<dbReference type="EC" id="2.1.1.-" evidence="1"/>
<dbReference type="EMBL" id="JX978525">
    <property type="protein sequence ID" value="AFV60453.1"/>
    <property type="molecule type" value="Genomic_DNA"/>
</dbReference>
<dbReference type="SMR" id="A0A096VHZ6"/>
<dbReference type="GO" id="GO:0046872">
    <property type="term" value="F:metal ion binding"/>
    <property type="evidence" value="ECO:0007669"/>
    <property type="project" value="UniProtKB-KW"/>
</dbReference>
<dbReference type="GO" id="GO:0008168">
    <property type="term" value="F:methyltransferase activity"/>
    <property type="evidence" value="ECO:0007669"/>
    <property type="project" value="UniProtKB-KW"/>
</dbReference>
<dbReference type="GO" id="GO:0032259">
    <property type="term" value="P:methylation"/>
    <property type="evidence" value="ECO:0007669"/>
    <property type="project" value="UniProtKB-KW"/>
</dbReference>
<dbReference type="Gene3D" id="1.10.1200.270">
    <property type="entry name" value="Methyltransferase, alpha-helical capping domain"/>
    <property type="match status" value="1"/>
</dbReference>
<dbReference type="Gene3D" id="3.40.50.150">
    <property type="entry name" value="Vaccinia Virus protein VP39"/>
    <property type="match status" value="1"/>
</dbReference>
<dbReference type="InterPro" id="IPR005299">
    <property type="entry name" value="MeTrfase_7"/>
</dbReference>
<dbReference type="InterPro" id="IPR042086">
    <property type="entry name" value="MeTrfase_capping"/>
</dbReference>
<dbReference type="InterPro" id="IPR029063">
    <property type="entry name" value="SAM-dependent_MTases_sf"/>
</dbReference>
<dbReference type="PANTHER" id="PTHR31009">
    <property type="entry name" value="S-ADENOSYL-L-METHIONINE:CARBOXYL METHYLTRANSFERASE FAMILY PROTEIN"/>
    <property type="match status" value="1"/>
</dbReference>
<dbReference type="Pfam" id="PF03492">
    <property type="entry name" value="Methyltransf_7"/>
    <property type="match status" value="1"/>
</dbReference>
<dbReference type="SUPFAM" id="SSF53335">
    <property type="entry name" value="S-adenosyl-L-methionine-dependent methyltransferases"/>
    <property type="match status" value="1"/>
</dbReference>
<gene>
    <name evidence="4" type="primary">MTL1</name>
</gene>
<accession>A0A096VHZ6</accession>
<keyword id="KW-0460">Magnesium</keyword>
<keyword id="KW-0479">Metal-binding</keyword>
<keyword id="KW-0489">Methyltransferase</keyword>
<keyword id="KW-0808">Transferase</keyword>
<evidence type="ECO:0000250" key="1">
    <source>
        <dbReference type="UniProtKB" id="A4GE70"/>
    </source>
</evidence>
<evidence type="ECO:0000250" key="2">
    <source>
        <dbReference type="UniProtKB" id="Q9FLN8"/>
    </source>
</evidence>
<evidence type="ECO:0000250" key="3">
    <source>
        <dbReference type="UniProtKB" id="Q9FZN8"/>
    </source>
</evidence>
<evidence type="ECO:0000303" key="4">
    <source>
    </source>
</evidence>
<evidence type="ECO:0000305" key="5"/>
<reference key="1">
    <citation type="journal article" date="2015" name="Planta">
        <title>Differential regulation of caffeine metabolism in Coffea arabica (Arabica) and Coffea canephora (Robusta).</title>
        <authorList>
            <person name="Perrois C."/>
            <person name="Strickler S.R."/>
            <person name="Mathieu G."/>
            <person name="Lepelley M."/>
            <person name="Bedon L."/>
            <person name="Michaux S."/>
            <person name="Husson J."/>
            <person name="Mueller L."/>
            <person name="Privat I."/>
        </authorList>
    </citation>
    <scope>NUCLEOTIDE SEQUENCE [GENOMIC DNA]</scope>
    <scope>GENE FAMILY</scope>
    <scope>NOMENCLATURE</scope>
    <source>
        <strain>cv. DH200-94</strain>
    </source>
</reference>